<name>YCF2_DAUCA</name>
<feature type="chain" id="PRO_0000276550" description="Protein Ycf2">
    <location>
        <begin position="1"/>
        <end position="2091"/>
    </location>
</feature>
<feature type="region of interest" description="Disordered" evidence="2">
    <location>
        <begin position="191"/>
        <end position="210"/>
    </location>
</feature>
<feature type="binding site" evidence="1">
    <location>
        <begin position="1432"/>
        <end position="1439"/>
    </location>
    <ligand>
        <name>ATP</name>
        <dbReference type="ChEBI" id="CHEBI:30616"/>
    </ligand>
</feature>
<organism>
    <name type="scientific">Daucus carota</name>
    <name type="common">Wild carrot</name>
    <dbReference type="NCBI Taxonomy" id="4039"/>
    <lineage>
        <taxon>Eukaryota</taxon>
        <taxon>Viridiplantae</taxon>
        <taxon>Streptophyta</taxon>
        <taxon>Embryophyta</taxon>
        <taxon>Tracheophyta</taxon>
        <taxon>Spermatophyta</taxon>
        <taxon>Magnoliopsida</taxon>
        <taxon>eudicotyledons</taxon>
        <taxon>Gunneridae</taxon>
        <taxon>Pentapetalae</taxon>
        <taxon>asterids</taxon>
        <taxon>campanulids</taxon>
        <taxon>Apiales</taxon>
        <taxon>Apiaceae</taxon>
        <taxon>Apioideae</taxon>
        <taxon>Scandiceae</taxon>
        <taxon>Daucinae</taxon>
        <taxon>Daucus</taxon>
        <taxon>Daucus sect. Daucus</taxon>
    </lineage>
</organism>
<reference key="1">
    <citation type="journal article" date="2006" name="BMC Genomics">
        <title>Complete plastid genome sequence of Daucus carota: implications for biotechnology and phylogeny of angiosperms.</title>
        <authorList>
            <person name="Ruhlman T."/>
            <person name="Lee S.-B."/>
            <person name="Jansen R.K."/>
            <person name="Hostetler J.B."/>
            <person name="Tallon L.J."/>
            <person name="Town C.D."/>
            <person name="Daniell H."/>
        </authorList>
    </citation>
    <scope>NUCLEOTIDE SEQUENCE [LARGE SCALE GENOMIC DNA]</scope>
    <source>
        <strain>cv. Danvers Half-long</strain>
    </source>
</reference>
<dbReference type="EMBL" id="DQ898156">
    <property type="protein sequence ID" value="ABI32467.1"/>
    <property type="molecule type" value="Genomic_DNA"/>
</dbReference>
<dbReference type="EMBL" id="DQ898156">
    <property type="protein sequence ID" value="ABI32486.1"/>
    <property type="molecule type" value="Genomic_DNA"/>
</dbReference>
<dbReference type="GO" id="GO:0009570">
    <property type="term" value="C:chloroplast stroma"/>
    <property type="evidence" value="ECO:0007669"/>
    <property type="project" value="UniProtKB-SubCell"/>
</dbReference>
<dbReference type="GO" id="GO:0005524">
    <property type="term" value="F:ATP binding"/>
    <property type="evidence" value="ECO:0007669"/>
    <property type="project" value="UniProtKB-KW"/>
</dbReference>
<dbReference type="GO" id="GO:0016887">
    <property type="term" value="F:ATP hydrolysis activity"/>
    <property type="evidence" value="ECO:0007669"/>
    <property type="project" value="InterPro"/>
</dbReference>
<dbReference type="CDD" id="cd19505">
    <property type="entry name" value="RecA-like_Ycf2"/>
    <property type="match status" value="1"/>
</dbReference>
<dbReference type="Gene3D" id="3.40.50.300">
    <property type="entry name" value="P-loop containing nucleotide triphosphate hydrolases"/>
    <property type="match status" value="1"/>
</dbReference>
<dbReference type="HAMAP" id="MF_01330">
    <property type="entry name" value="Ycf2"/>
    <property type="match status" value="1"/>
</dbReference>
<dbReference type="InterPro" id="IPR003593">
    <property type="entry name" value="AAA+_ATPase"/>
</dbReference>
<dbReference type="InterPro" id="IPR003959">
    <property type="entry name" value="ATPase_AAA_core"/>
</dbReference>
<dbReference type="InterPro" id="IPR027417">
    <property type="entry name" value="P-loop_NTPase"/>
</dbReference>
<dbReference type="InterPro" id="IPR008543">
    <property type="entry name" value="Uncharacterised_Ycf2"/>
</dbReference>
<dbReference type="InterPro" id="IPR056777">
    <property type="entry name" value="Ycf2_N"/>
</dbReference>
<dbReference type="PANTHER" id="PTHR33078:SF51">
    <property type="entry name" value="PROTEIN TIC 214"/>
    <property type="match status" value="1"/>
</dbReference>
<dbReference type="PANTHER" id="PTHR33078">
    <property type="entry name" value="PROTEIN YCF2-RELATED"/>
    <property type="match status" value="1"/>
</dbReference>
<dbReference type="Pfam" id="PF00004">
    <property type="entry name" value="AAA"/>
    <property type="match status" value="1"/>
</dbReference>
<dbReference type="Pfam" id="PF05695">
    <property type="entry name" value="Ycf2"/>
    <property type="match status" value="3"/>
</dbReference>
<dbReference type="SMART" id="SM00382">
    <property type="entry name" value="AAA"/>
    <property type="match status" value="1"/>
</dbReference>
<dbReference type="SUPFAM" id="SSF52540">
    <property type="entry name" value="P-loop containing nucleoside triphosphate hydrolases"/>
    <property type="match status" value="1"/>
</dbReference>
<geneLocation type="chloroplast"/>
<accession>Q0G9Q1</accession>
<evidence type="ECO:0000255" key="1">
    <source>
        <dbReference type="HAMAP-Rule" id="MF_01330"/>
    </source>
</evidence>
<evidence type="ECO:0000256" key="2">
    <source>
        <dbReference type="SAM" id="MobiDB-lite"/>
    </source>
</evidence>
<proteinExistence type="inferred from homology"/>
<gene>
    <name evidence="1" type="primary">ycf2-A</name>
</gene>
<gene>
    <name evidence="1" type="primary">ycf2-B</name>
</gene>
<sequence>MKGHQFKFWIFELREILREIKNSHYFLDSWTQFNSVGSFIHIFFHQEHFIKLFDPRIWSILLSRNSQGSTSNRYFTIKGVVILFVVAVLIYRINSRNMVERKNLYLIGLLPIPMNSIGPRNDTLEESVGSSNINRLIVSLLYLPKGKKISESCFLNPKESTWVLPITKKCSMPESNWGSRWWRNWIGKKRDSSQLKGSSDQSRDPLDSISNEDSEYHTLINQRKIQQLKERSILWDPSFLQTERTEIESDRFPKSLSGYSSMSRLFTEREKQVINHLLPEEIEEFLGNPTRSVRSFFSDRWSELHLGSNPTERSTRDHKLLKKQQDLSFVPSRRSEKKEMVNIFKIITYLQNTVSIHPISSYPGCDMVPKDEPDMDSSNKISFLNKNPFLDLFHLFHDRNMGGYTLHHDFESEERFQEMADLFTLSITEPDLVYHKGFAFSIDSYGLDQKQFLNEVFNSRDESKKKSLLALPPFFYEENESFYRRIIKKWVRISCGNDLEDPKPKKMVFASNNLNVLNRFFLMNRSDRNFEYGIQRDQIGKDTLNHRTRMKYMINQHLSNLKKSQKRWFDPLILISRTERSTNRDPDAYRYKWSNGSNNFQEHLDHFVSERKSRFRVVFDRLRINQYSIDWSEVIDKKGLSKPFRFFLSKSLLFLSKSLLFLSKFLFFLSNSLPFFFVSFGNIPIHRSEIYIYELKGPNDQLCNQLLESIGLQIVHLKKLKPFLLDDHDTSQKSKFLINGGTISPFLFNKIPKWMIYSFHTRNNRRKSFANTDSYFSTIFHDQDYWLNPVKPFHRSSLISSFYKANQLRFLNNPHHFCFYCNKRFPFYVEKARINNSDFTYGQFLNILFIHNKIFSLCVGKKKHAFWGRDTISPIESRVSNIFIPNDFPQGGGDETYNLYKSSHFPSRSDPFVRRAIYSIADISGTPLTEGQIVNFERTYCQPLSDLNLSDSEGKNSHQYLNFNSNMGLIHTPCSEKYLPSEKRKNRSLFLKKYVEKGQMYRTFQRDSAFSTLSKWNLFQTYIPWFLTSTGHKYLNWIFLDTFSGLLPIHLLPIHRLPILSSSQKFVSIFHDIMHVLDISWRILQKKLGLPQRNPIRKISSKCLHNLLLSEEMIHRNNESPLISTHLRSPNVREFLYSILFLLLVAGYLVRTHLIFVSRASSELQIEFEKVKSLMISSYMIELRKLLDRYPTSEPNSFWLKNLFLVALEQLGDSLEEIWGFASGGNMLLGGDSAYGVKSIRSKKKYLNINLIDLISIIPNPISRITFSKNTRHLSHTSKEIYSLIRKRKNVNGDWIDDKIESWVANSDSIDDEEREFLVQLSTLTTEKRIDQILLSLTHSDHLSKNDSGYQMIEQRGAIYLRYLVDIHKKYLMNYEFNTSCLAERRIFLAHYQTITYSQTSCGANSFHLPSHGKPFSLRLALSPSRGILVIGSIGTGRSYLVKYLATNSYVPFITVFLNKFLDNLSEDIDASEDIDASEDIDASEDIDASDDIDRDLHTELELLTMDMMSEKDRFYITLQFELAKAMSPCIIWIPNIHDLDVNESNYFSLGLLVNHLSRDCERCSTRNILVIASTHIPQKVDPALIAPNKLNTCIKIRRLLIPQQRKHFFTLSYTRGFRLEKKMFHTNGFGSITMGSNARDLVALTNEALSISITQKKSIIDTNTIRSAFHRQTWDLRSQVRSVQDHGILFYQIGRAVAQNVLLSNCPIDPISIYIKKKSCNEGDSYLYKWYFELGTSMKKLTILLYLLSCSAGSVAQDLWSLPGPDERNGITSYGLVENDSDLVHGLLQVEGALVGSSRTEKDCSQFDNDRVTLLLRPEPRNPLDMMQNGSCSILDQRFLYEKNESEFEEGEGALDPQQIEEDLFNHIVWAPRIWHPWGILFDCIERPNELGFPYWSRSFRGKRILYDEEDELQENDSEFLQSGTMQYQTRDRSSKEQGFFRISQFIWDPADPLFVLFKDQSSVSVFSHRELFADEEMSKGLLTSQTDPPTSIYKRWFIKKTQEKHFELLINRQRWFRTTSSLSNGSFRSNTLSESYQYLSNLFLSNGTLLDQMTKTLLRKRWLFPDEMKIGFMEQEKDFPFLSRKVMWP</sequence>
<protein>
    <recommendedName>
        <fullName evidence="1">Protein Ycf2</fullName>
    </recommendedName>
</protein>
<keyword id="KW-0067">ATP-binding</keyword>
<keyword id="KW-0150">Chloroplast</keyword>
<keyword id="KW-0547">Nucleotide-binding</keyword>
<keyword id="KW-0934">Plastid</keyword>
<comment type="function">
    <text>Probable ATPase of unknown function. Its presence in a non-photosynthetic plant (Epifagus virginiana) and experiments in tobacco indicate that it has an essential function which is probably not related to photosynthesis.</text>
</comment>
<comment type="subcellular location">
    <subcellularLocation>
        <location evidence="1">Plastid</location>
        <location evidence="1">Chloroplast stroma</location>
    </subcellularLocation>
</comment>
<comment type="similarity">
    <text evidence="1">Belongs to the Ycf2 family.</text>
</comment>